<evidence type="ECO:0000269" key="1">
    <source>
    </source>
</evidence>
<evidence type="ECO:0000269" key="2">
    <source>
    </source>
</evidence>
<evidence type="ECO:0000269" key="3">
    <source>
    </source>
</evidence>
<evidence type="ECO:0000269" key="4">
    <source>
    </source>
</evidence>
<evidence type="ECO:0000303" key="5">
    <source>
    </source>
</evidence>
<evidence type="ECO:0000303" key="6">
    <source>
    </source>
</evidence>
<evidence type="ECO:0000305" key="7"/>
<sequence>MAIEKPVIVACACPLAGHVGPVLSLVRGLLNRGYEVTFVTGNAFKEKVIEAGCTFVPLQGRADYHEYNLPEIAPGLLTIPPGLEQTGYSMNEIFVKAIPEQYDALQTALKQVEAENKSAVVIGETMFLGVHPISLGAPGLKPQGVITLGTIPCMLKAEKAPGVPSLEPMIDTLVRQQVFQPGTDSEKEIMKTLGATKEPEFLLENIYSSPDRFLQLCPPSLEFHLTSPPPGFSFAGSAPHVKSAGLATPPHLPSWWPDVLSAKRLIVVTQGTAAINYEDLLIPALQAFADEEDTLVVGILGVKGASLPDSVKVPANARIVDYFPYDELLPHASVFIYNGGYGGLQHSLSHGVPVIIGGGMLVDKPAVASRAVWAGVGYDLQTLQATSELVSTAVKEVLATPSYHEKAMAVKKELEKYKSLDILESAISELAS</sequence>
<gene>
    <name evidence="5" type="primary">ugtB1</name>
</gene>
<proteinExistence type="evidence at protein level"/>
<comment type="function">
    <text evidence="1 2 4">Catalyzes the second glycosylation step of sophorolipid biosynthesis, the further glucosylation of the previoulsy formed glucolipid to give rise to an acidic sophorolipid.</text>
</comment>
<comment type="catalytic activity">
    <reaction evidence="4">
        <text>(9Z)-17-hydroxyoctadec-9-enoate 17-O-beta-D-glucoside + UDP-alpha-D-glucose = (9Z)-17-hydroxyoctadec-9-enoate 17-O-sophoroside + UDP + H(+)</text>
        <dbReference type="Rhea" id="RHEA:60964"/>
        <dbReference type="ChEBI" id="CHEBI:15378"/>
        <dbReference type="ChEBI" id="CHEBI:58223"/>
        <dbReference type="ChEBI" id="CHEBI:58885"/>
        <dbReference type="ChEBI" id="CHEBI:144057"/>
        <dbReference type="ChEBI" id="CHEBI:144058"/>
    </reaction>
</comment>
<comment type="induction">
    <text evidence="3">Induced in early stationary phase (at protein level).</text>
</comment>
<comment type="similarity">
    <text evidence="7">Belongs to the UDP-glycosyltransferase family.</text>
</comment>
<name>UGTB1_STABO</name>
<organism>
    <name type="scientific">Starmerella bombicola</name>
    <name type="common">Yeast</name>
    <name type="synonym">Candida bombicola</name>
    <dbReference type="NCBI Taxonomy" id="75736"/>
    <lineage>
        <taxon>Eukaryota</taxon>
        <taxon>Fungi</taxon>
        <taxon>Dikarya</taxon>
        <taxon>Ascomycota</taxon>
        <taxon>Saccharomycotina</taxon>
        <taxon>Dipodascomycetes</taxon>
        <taxon>Dipodascales</taxon>
        <taxon>Trichomonascaceae</taxon>
        <taxon>Starmerella</taxon>
    </lineage>
</organism>
<reference key="1">
    <citation type="journal article" date="2011" name="Yeast">
        <title>Cloning and functional characterization of the UDP-glucosyltransferase UgtB1 involved in sophorolipid production by Candida bombicola and creation of a glucolipid-producing yeast strain.</title>
        <authorList>
            <person name="Saerens K.M."/>
            <person name="Zhang J."/>
            <person name="Saey L."/>
            <person name="Van Bogaert I.N."/>
            <person name="Soetaert W."/>
        </authorList>
    </citation>
    <scope>NUCLEOTIDE SEQUENCE [GENOMIC DNA]</scope>
    <scope>FUNCTION</scope>
    <source>
        <strain>ATCC 22214 / CBS 6009 / JCM 9596 / NBRC 10243 / NRRL Y-17069</strain>
    </source>
</reference>
<reference key="2">
    <citation type="journal article" date="2013" name="J. Proteome Res.">
        <title>SILAC-based proteome analysis of Starmerella bombicola sophorolipid production.</title>
        <authorList>
            <person name="Ciesielska K."/>
            <person name="Li B."/>
            <person name="Groeneboer S."/>
            <person name="Van Bogaert I."/>
            <person name="Lin Y.C."/>
            <person name="Soetaert W."/>
            <person name="Van de Peer Y."/>
            <person name="Devreese B."/>
        </authorList>
    </citation>
    <scope>IDENTIFICATION BY MASS SPECTROMETRY</scope>
    <scope>INDUCTION</scope>
    <source>
        <strain>ATCC 22214 / CBS 6009 / JCM 9596 / NBRC 10243 / NRRL Y-17069</strain>
    </source>
</reference>
<reference key="3">
    <citation type="journal article" date="2013" name="Mol. Microbiol.">
        <title>The biosynthetic gene cluster for sophorolipids: a biotechnological interesting biosurfactant produced by Starmerella bombicola.</title>
        <authorList>
            <person name="Van Bogaert I.N."/>
            <person name="Holvoet K."/>
            <person name="Roelants S.L."/>
            <person name="Li B."/>
            <person name="Lin Y.C."/>
            <person name="Van de Peer Y."/>
            <person name="Soetaert W."/>
        </authorList>
    </citation>
    <scope>FUNCTION</scope>
</reference>
<reference key="4">
    <citation type="journal article" date="2015" name="FEMS Yeast Res.">
        <title>Characterization of sophorolipid biosynthetic enzymes from Starmerella bombicola.</title>
        <authorList>
            <person name="Saerens K.M."/>
            <person name="Van Bogaert I.N."/>
            <person name="Soetaert W."/>
        </authorList>
    </citation>
    <scope>FUNCTION</scope>
    <scope>SUBSTRATE SPECIFICITY</scope>
</reference>
<protein>
    <recommendedName>
        <fullName evidence="5">UDP-glucosyltransferase B1</fullName>
        <shortName evidence="6">GTII</shortName>
        <ecNumber evidence="4">2.4.1.-</ecNumber>
    </recommendedName>
</protein>
<dbReference type="EC" id="2.4.1.-" evidence="4"/>
<dbReference type="EMBL" id="HM440974">
    <property type="protein sequence ID" value="ADT71703.1"/>
    <property type="molecule type" value="Genomic_DNA"/>
</dbReference>
<dbReference type="SMR" id="E9L011"/>
<dbReference type="GO" id="GO:0016906">
    <property type="term" value="F:sterol 3-beta-glucosyltransferase activity"/>
    <property type="evidence" value="ECO:0007669"/>
    <property type="project" value="UniProtKB-ARBA"/>
</dbReference>
<dbReference type="GO" id="GO:0005975">
    <property type="term" value="P:carbohydrate metabolic process"/>
    <property type="evidence" value="ECO:0007669"/>
    <property type="project" value="InterPro"/>
</dbReference>
<dbReference type="GO" id="GO:0030259">
    <property type="term" value="P:lipid glycosylation"/>
    <property type="evidence" value="ECO:0007669"/>
    <property type="project" value="InterPro"/>
</dbReference>
<dbReference type="CDD" id="cd03784">
    <property type="entry name" value="GT1_Gtf-like"/>
    <property type="match status" value="1"/>
</dbReference>
<dbReference type="Gene3D" id="3.40.50.2000">
    <property type="entry name" value="Glycogen Phosphorylase B"/>
    <property type="match status" value="2"/>
</dbReference>
<dbReference type="InterPro" id="IPR010610">
    <property type="entry name" value="EryCIII-like_C"/>
</dbReference>
<dbReference type="InterPro" id="IPR004276">
    <property type="entry name" value="GlycoTrans_28_N"/>
</dbReference>
<dbReference type="InterPro" id="IPR002213">
    <property type="entry name" value="UDP_glucos_trans"/>
</dbReference>
<dbReference type="PANTHER" id="PTHR21015:SF22">
    <property type="entry name" value="GLYCOSYLTRANSFERASE"/>
    <property type="match status" value="1"/>
</dbReference>
<dbReference type="PANTHER" id="PTHR21015">
    <property type="entry name" value="UDP-N-ACETYLGLUCOSAMINE--N-ACETYLMURAMYL-(PENTAPEPTIDE) PYROPHOSPHORYL-UNDECAPRENOL N-ACETYLGLUCOSAMINE TRANSFERASE 1"/>
    <property type="match status" value="1"/>
</dbReference>
<dbReference type="Pfam" id="PF06722">
    <property type="entry name" value="EryCIII-like_C"/>
    <property type="match status" value="1"/>
</dbReference>
<dbReference type="Pfam" id="PF03033">
    <property type="entry name" value="Glyco_transf_28"/>
    <property type="match status" value="1"/>
</dbReference>
<dbReference type="SUPFAM" id="SSF53756">
    <property type="entry name" value="UDP-Glycosyltransferase/glycogen phosphorylase"/>
    <property type="match status" value="1"/>
</dbReference>
<keyword id="KW-0328">Glycosyltransferase</keyword>
<keyword id="KW-0808">Transferase</keyword>
<feature type="chain" id="PRO_0000443098" description="UDP-glucosyltransferase B1">
    <location>
        <begin position="1"/>
        <end position="432"/>
    </location>
</feature>
<accession>E9L011</accession>